<organism>
    <name type="scientific">Escherichia coli O7:K1 (strain IAI39 / ExPEC)</name>
    <dbReference type="NCBI Taxonomy" id="585057"/>
    <lineage>
        <taxon>Bacteria</taxon>
        <taxon>Pseudomonadati</taxon>
        <taxon>Pseudomonadota</taxon>
        <taxon>Gammaproteobacteria</taxon>
        <taxon>Enterobacterales</taxon>
        <taxon>Enterobacteriaceae</taxon>
        <taxon>Escherichia</taxon>
    </lineage>
</organism>
<accession>B7NVR1</accession>
<gene>
    <name evidence="2" type="primary">rnb</name>
    <name type="ordered locus">ECIAI39_1628</name>
</gene>
<proteinExistence type="inferred from homology"/>
<keyword id="KW-0963">Cytoplasm</keyword>
<keyword id="KW-0269">Exonuclease</keyword>
<keyword id="KW-0378">Hydrolase</keyword>
<keyword id="KW-0540">Nuclease</keyword>
<keyword id="KW-0694">RNA-binding</keyword>
<dbReference type="EC" id="3.1.13.1" evidence="2"/>
<dbReference type="EMBL" id="CU928164">
    <property type="protein sequence ID" value="CAR17759.1"/>
    <property type="molecule type" value="Genomic_DNA"/>
</dbReference>
<dbReference type="RefSeq" id="WP_000484984.1">
    <property type="nucleotide sequence ID" value="NC_011750.1"/>
</dbReference>
<dbReference type="RefSeq" id="YP_002407628.1">
    <property type="nucleotide sequence ID" value="NC_011750.1"/>
</dbReference>
<dbReference type="SMR" id="B7NVR1"/>
<dbReference type="STRING" id="585057.ECIAI39_1628"/>
<dbReference type="KEGG" id="ect:ECIAI39_1628"/>
<dbReference type="PATRIC" id="fig|585057.6.peg.1700"/>
<dbReference type="HOGENOM" id="CLU_002333_7_3_6"/>
<dbReference type="Proteomes" id="UP000000749">
    <property type="component" value="Chromosome"/>
</dbReference>
<dbReference type="GO" id="GO:0005829">
    <property type="term" value="C:cytosol"/>
    <property type="evidence" value="ECO:0007669"/>
    <property type="project" value="TreeGrafter"/>
</dbReference>
<dbReference type="GO" id="GO:0008859">
    <property type="term" value="F:exoribonuclease II activity"/>
    <property type="evidence" value="ECO:0007669"/>
    <property type="project" value="UniProtKB-UniRule"/>
</dbReference>
<dbReference type="GO" id="GO:0003723">
    <property type="term" value="F:RNA binding"/>
    <property type="evidence" value="ECO:0007669"/>
    <property type="project" value="UniProtKB-KW"/>
</dbReference>
<dbReference type="GO" id="GO:0006402">
    <property type="term" value="P:mRNA catabolic process"/>
    <property type="evidence" value="ECO:0007669"/>
    <property type="project" value="UniProtKB-UniRule"/>
</dbReference>
<dbReference type="FunFam" id="2.40.50.140:FF:000079">
    <property type="entry name" value="Exoribonuclease 2"/>
    <property type="match status" value="1"/>
</dbReference>
<dbReference type="FunFam" id="2.40.50.140:FF:000081">
    <property type="entry name" value="Exoribonuclease 2"/>
    <property type="match status" value="1"/>
</dbReference>
<dbReference type="FunFam" id="2.40.50.640:FF:000001">
    <property type="entry name" value="Exoribonuclease 2"/>
    <property type="match status" value="1"/>
</dbReference>
<dbReference type="Gene3D" id="2.40.50.640">
    <property type="match status" value="1"/>
</dbReference>
<dbReference type="Gene3D" id="2.40.50.140">
    <property type="entry name" value="Nucleic acid-binding proteins"/>
    <property type="match status" value="2"/>
</dbReference>
<dbReference type="HAMAP" id="MF_01036">
    <property type="entry name" value="RNase_II"/>
    <property type="match status" value="1"/>
</dbReference>
<dbReference type="InterPro" id="IPR011129">
    <property type="entry name" value="CSD"/>
</dbReference>
<dbReference type="InterPro" id="IPR012340">
    <property type="entry name" value="NA-bd_OB-fold"/>
</dbReference>
<dbReference type="InterPro" id="IPR013223">
    <property type="entry name" value="RNase_B_OB_dom"/>
</dbReference>
<dbReference type="InterPro" id="IPR011804">
    <property type="entry name" value="RNase_II"/>
</dbReference>
<dbReference type="InterPro" id="IPR001900">
    <property type="entry name" value="RNase_II/R"/>
</dbReference>
<dbReference type="InterPro" id="IPR022966">
    <property type="entry name" value="RNase_II/R_CS"/>
</dbReference>
<dbReference type="InterPro" id="IPR004476">
    <property type="entry name" value="RNase_II/RNase_R"/>
</dbReference>
<dbReference type="InterPro" id="IPR050180">
    <property type="entry name" value="RNR_Ribonuclease"/>
</dbReference>
<dbReference type="InterPro" id="IPR003029">
    <property type="entry name" value="S1_domain"/>
</dbReference>
<dbReference type="NCBIfam" id="TIGR00358">
    <property type="entry name" value="3_prime_RNase"/>
    <property type="match status" value="1"/>
</dbReference>
<dbReference type="NCBIfam" id="NF003455">
    <property type="entry name" value="PRK05054.1"/>
    <property type="match status" value="1"/>
</dbReference>
<dbReference type="NCBIfam" id="TIGR02062">
    <property type="entry name" value="RNase_B"/>
    <property type="match status" value="1"/>
</dbReference>
<dbReference type="PANTHER" id="PTHR23355:SF37">
    <property type="entry name" value="EXORIBONUCLEASE 2"/>
    <property type="match status" value="1"/>
</dbReference>
<dbReference type="PANTHER" id="PTHR23355">
    <property type="entry name" value="RIBONUCLEASE"/>
    <property type="match status" value="1"/>
</dbReference>
<dbReference type="Pfam" id="PF08206">
    <property type="entry name" value="OB_RNB"/>
    <property type="match status" value="1"/>
</dbReference>
<dbReference type="Pfam" id="PF00773">
    <property type="entry name" value="RNB"/>
    <property type="match status" value="1"/>
</dbReference>
<dbReference type="Pfam" id="PF00575">
    <property type="entry name" value="S1"/>
    <property type="match status" value="1"/>
</dbReference>
<dbReference type="SMART" id="SM00357">
    <property type="entry name" value="CSP"/>
    <property type="match status" value="1"/>
</dbReference>
<dbReference type="SMART" id="SM00955">
    <property type="entry name" value="RNB"/>
    <property type="match status" value="1"/>
</dbReference>
<dbReference type="SUPFAM" id="SSF50249">
    <property type="entry name" value="Nucleic acid-binding proteins"/>
    <property type="match status" value="4"/>
</dbReference>
<dbReference type="PROSITE" id="PS01175">
    <property type="entry name" value="RIBONUCLEASE_II"/>
    <property type="match status" value="1"/>
</dbReference>
<comment type="function">
    <text evidence="2">Involved in mRNA degradation. Hydrolyzes single-stranded polyribonucleotides processively in the 3' to 5' direction.</text>
</comment>
<comment type="catalytic activity">
    <reaction evidence="2">
        <text>Exonucleolytic cleavage in the 3'- to 5'-direction to yield nucleoside 5'-phosphates.</text>
        <dbReference type="EC" id="3.1.13.1"/>
    </reaction>
</comment>
<comment type="subcellular location">
    <subcellularLocation>
        <location evidence="2">Cytoplasm</location>
    </subcellularLocation>
</comment>
<comment type="similarity">
    <text evidence="2">Belongs to the RNR ribonuclease family. RNase II subfamily.</text>
</comment>
<protein>
    <recommendedName>
        <fullName evidence="2">Exoribonuclease 2</fullName>
        <ecNumber evidence="2">3.1.13.1</ecNumber>
    </recommendedName>
    <alternativeName>
        <fullName evidence="2">Exoribonuclease II</fullName>
        <shortName evidence="2">RNase II</shortName>
        <shortName evidence="2">Ribonuclease II</shortName>
    </alternativeName>
</protein>
<evidence type="ECO:0000255" key="1"/>
<evidence type="ECO:0000255" key="2">
    <source>
        <dbReference type="HAMAP-Rule" id="MF_01036"/>
    </source>
</evidence>
<sequence length="644" mass="72491">MFQDNPLLAQLKQQLHSQTPRAEGVVKATEKGFGFLEVDAQKSYFIPPPQMKKVMHGDRIIAVIHSEKERESAEPEELVEPFLTRFVGKVQGKNDRLAIVPDHPLLKDAIPCRAARGLNHEFKEGDWAVAEMRRHPLKGDRSFYAELTQYITFGDDHFVPWWVTLARHNLEKEAPDGVATEMLDEGLVREDLTALDFVTIDSASTEDMDDALFAKALPDDKLQLIVAIADPTAWIAEGSKLDKAAKIRAFTNYLPGFNIPMLPRELSDDLCSLRANEVRPVLACRMTLSADGTIEDNIEFFAATIESKAKLVYDQVSDWLENTGDWQPESEAIAEQVRLLAQICQRRGEWRHNHALVFKDRPDYRFILGEKGEVLDIVAEPRRIANRIVEEAMIAANICAARVLRDKLGFGIYNVHMGFDPANADALAALLKTHGLHVDAEEVLTLDGFCKLRRELDAQPTGFLDSRIRRFQSFAEISTEPGPHFGLGLEAYATWTSPIRKYGDMINHRLLKAVIKGETATRPQDEITVQMAERRRLNRMAERDVGDWLYARFLKDKAGTDTRFAAEIVDISRGGMRVRLVDNGAIAFIPAPFLHAVRDELVCSQENGTVQIKGETVYKVTDVIDVTIAEVRMETRSIIARPVA</sequence>
<name>RNB_ECO7I</name>
<reference key="1">
    <citation type="journal article" date="2009" name="PLoS Genet.">
        <title>Organised genome dynamics in the Escherichia coli species results in highly diverse adaptive paths.</title>
        <authorList>
            <person name="Touchon M."/>
            <person name="Hoede C."/>
            <person name="Tenaillon O."/>
            <person name="Barbe V."/>
            <person name="Baeriswyl S."/>
            <person name="Bidet P."/>
            <person name="Bingen E."/>
            <person name="Bonacorsi S."/>
            <person name="Bouchier C."/>
            <person name="Bouvet O."/>
            <person name="Calteau A."/>
            <person name="Chiapello H."/>
            <person name="Clermont O."/>
            <person name="Cruveiller S."/>
            <person name="Danchin A."/>
            <person name="Diard M."/>
            <person name="Dossat C."/>
            <person name="Karoui M.E."/>
            <person name="Frapy E."/>
            <person name="Garry L."/>
            <person name="Ghigo J.M."/>
            <person name="Gilles A.M."/>
            <person name="Johnson J."/>
            <person name="Le Bouguenec C."/>
            <person name="Lescat M."/>
            <person name="Mangenot S."/>
            <person name="Martinez-Jehanne V."/>
            <person name="Matic I."/>
            <person name="Nassif X."/>
            <person name="Oztas S."/>
            <person name="Petit M.A."/>
            <person name="Pichon C."/>
            <person name="Rouy Z."/>
            <person name="Ruf C.S."/>
            <person name="Schneider D."/>
            <person name="Tourret J."/>
            <person name="Vacherie B."/>
            <person name="Vallenet D."/>
            <person name="Medigue C."/>
            <person name="Rocha E.P.C."/>
            <person name="Denamur E."/>
        </authorList>
    </citation>
    <scope>NUCLEOTIDE SEQUENCE [LARGE SCALE GENOMIC DNA]</scope>
    <source>
        <strain>IAI39 / ExPEC</strain>
    </source>
</reference>
<feature type="chain" id="PRO_1000135863" description="Exoribonuclease 2">
    <location>
        <begin position="1"/>
        <end position="644"/>
    </location>
</feature>
<feature type="domain" description="RNB" evidence="1">
    <location>
        <begin position="189"/>
        <end position="516"/>
    </location>
</feature>
<feature type="domain" description="S1 motif" evidence="2">
    <location>
        <begin position="561"/>
        <end position="643"/>
    </location>
</feature>